<name>FSHR_CAVPO</name>
<proteinExistence type="evidence at transcript level"/>
<accession>Q8R428</accession>
<protein>
    <recommendedName>
        <fullName>Follicle-stimulating hormone receptor</fullName>
        <shortName>FSH-R</shortName>
    </recommendedName>
    <alternativeName>
        <fullName>Follitropin receptor</fullName>
    </alternativeName>
</protein>
<organism>
    <name type="scientific">Cavia porcellus</name>
    <name type="common">Guinea pig</name>
    <dbReference type="NCBI Taxonomy" id="10141"/>
    <lineage>
        <taxon>Eukaryota</taxon>
        <taxon>Metazoa</taxon>
        <taxon>Chordata</taxon>
        <taxon>Craniata</taxon>
        <taxon>Vertebrata</taxon>
        <taxon>Euteleostomi</taxon>
        <taxon>Mammalia</taxon>
        <taxon>Eutheria</taxon>
        <taxon>Euarchontoglires</taxon>
        <taxon>Glires</taxon>
        <taxon>Rodentia</taxon>
        <taxon>Hystricomorpha</taxon>
        <taxon>Caviidae</taxon>
        <taxon>Cavia</taxon>
    </lineage>
</organism>
<feature type="signal peptide" evidence="3">
    <location>
        <begin position="1"/>
        <end position="17"/>
    </location>
</feature>
<feature type="chain" id="PRO_0000233342" description="Follicle-stimulating hormone receptor">
    <location>
        <begin position="18"/>
        <end position="695"/>
    </location>
</feature>
<feature type="topological domain" description="Extracellular" evidence="3">
    <location>
        <begin position="18"/>
        <end position="366"/>
    </location>
</feature>
<feature type="transmembrane region" description="Helical; Name=1" evidence="3">
    <location>
        <begin position="367"/>
        <end position="387"/>
    </location>
</feature>
<feature type="topological domain" description="Cytoplasmic" evidence="3">
    <location>
        <begin position="388"/>
        <end position="398"/>
    </location>
</feature>
<feature type="transmembrane region" description="Helical; Name=2" evidence="3">
    <location>
        <begin position="399"/>
        <end position="421"/>
    </location>
</feature>
<feature type="topological domain" description="Extracellular" evidence="3">
    <location>
        <begin position="422"/>
        <end position="443"/>
    </location>
</feature>
<feature type="transmembrane region" description="Helical; Name=3" evidence="3">
    <location>
        <begin position="444"/>
        <end position="465"/>
    </location>
</feature>
<feature type="topological domain" description="Cytoplasmic" evidence="3">
    <location>
        <begin position="466"/>
        <end position="485"/>
    </location>
</feature>
<feature type="transmembrane region" description="Helical; Name=4" evidence="3">
    <location>
        <begin position="486"/>
        <end position="508"/>
    </location>
</feature>
<feature type="topological domain" description="Extracellular" evidence="3">
    <location>
        <begin position="509"/>
        <end position="528"/>
    </location>
</feature>
<feature type="transmembrane region" description="Helical; Name=5" evidence="3">
    <location>
        <begin position="529"/>
        <end position="550"/>
    </location>
</feature>
<feature type="topological domain" description="Cytoplasmic" evidence="3">
    <location>
        <begin position="551"/>
        <end position="573"/>
    </location>
</feature>
<feature type="transmembrane region" description="Helical; Name=6" evidence="3">
    <location>
        <begin position="574"/>
        <end position="597"/>
    </location>
</feature>
<feature type="topological domain" description="Extracellular" evidence="3">
    <location>
        <begin position="598"/>
        <end position="608"/>
    </location>
</feature>
<feature type="transmembrane region" description="Helical; Name=7" evidence="3">
    <location>
        <begin position="609"/>
        <end position="630"/>
    </location>
</feature>
<feature type="topological domain" description="Cytoplasmic" evidence="3">
    <location>
        <begin position="631"/>
        <end position="695"/>
    </location>
</feature>
<feature type="domain" description="LRRNT">
    <location>
        <begin position="18"/>
        <end position="46"/>
    </location>
</feature>
<feature type="repeat" description="LRR 1">
    <location>
        <begin position="49"/>
        <end position="72"/>
    </location>
</feature>
<feature type="repeat" description="LRR 2">
    <location>
        <begin position="73"/>
        <end position="97"/>
    </location>
</feature>
<feature type="repeat" description="LRR 3">
    <location>
        <begin position="98"/>
        <end position="118"/>
    </location>
</feature>
<feature type="repeat" description="LRR 4">
    <location>
        <begin position="119"/>
        <end position="143"/>
    </location>
</feature>
<feature type="repeat" description="LRR 5">
    <location>
        <begin position="144"/>
        <end position="169"/>
    </location>
</feature>
<feature type="repeat" description="LRR 6">
    <location>
        <begin position="170"/>
        <end position="192"/>
    </location>
</feature>
<feature type="repeat" description="LRR 7">
    <location>
        <begin position="193"/>
        <end position="216"/>
    </location>
</feature>
<feature type="repeat" description="LRR 8">
    <location>
        <begin position="217"/>
        <end position="240"/>
    </location>
</feature>
<feature type="repeat" description="LRR 9">
    <location>
        <begin position="241"/>
        <end position="259"/>
    </location>
</feature>
<feature type="region of interest" description="Disordered" evidence="5">
    <location>
        <begin position="658"/>
        <end position="677"/>
    </location>
</feature>
<feature type="modified residue" description="Sulfotyrosine" evidence="2">
    <location>
        <position position="335"/>
    </location>
</feature>
<feature type="glycosylation site" description="N-linked (GlcNAc...) asparagine" evidence="3">
    <location>
        <position position="191"/>
    </location>
</feature>
<feature type="glycosylation site" description="N-linked (GlcNAc...) asparagine" evidence="3">
    <location>
        <position position="199"/>
    </location>
</feature>
<feature type="glycosylation site" description="N-linked (GlcNAc...) asparagine" evidence="3">
    <location>
        <position position="293"/>
    </location>
</feature>
<feature type="disulfide bond" evidence="4">
    <location>
        <begin position="18"/>
        <end position="25"/>
    </location>
</feature>
<feature type="disulfide bond" evidence="4">
    <location>
        <begin position="23"/>
        <end position="32"/>
    </location>
</feature>
<feature type="disulfide bond" evidence="2">
    <location>
        <begin position="275"/>
        <end position="346"/>
    </location>
</feature>
<feature type="disulfide bond" evidence="2">
    <location>
        <begin position="276"/>
        <end position="356"/>
    </location>
</feature>
<feature type="disulfide bond" evidence="2">
    <location>
        <begin position="276"/>
        <end position="292"/>
    </location>
</feature>
<feature type="disulfide bond" evidence="2">
    <location>
        <begin position="292"/>
        <end position="338"/>
    </location>
</feature>
<feature type="disulfide bond" evidence="4">
    <location>
        <begin position="442"/>
        <end position="517"/>
    </location>
</feature>
<sequence length="695" mass="77838">MALLLVSLLAFMSLGSGCHHRLCHCSNRVFLCQESKVTEIPSDLPRNAVELRFVLTKLRVIPKGAFSGFGDLEKIEISQNDALEVIEADVFSNLPNLHEIRIEKANNLLYINPEAFQNLPNLRYLLISNTGIRHLPAVHKIQSLQKVLLDIQDNINIHTVERNSFLGLSSESVILRLNKNGIQEIQNCAFNGTQLDDLNLSDNDNLEELPNGVFQGASGPVILDISRTRINSLPSHGLENLKKLRARSTYNLKKLPSLEKFAALVEASLTYPSHCCAFANWRRQISELHPICNKSILRQEVNDITQAGAQRVSLAEDDEFSYSRGFDTMYAEFDYDLCKEVVDVTCSPKPDAFNPCEDIMGYNILRVLIWFISILAITGNVAVLVVLTTSQYKLTVPRFLMCNLAFADLCIGIYLLLIASVDVHTRTLYHNYAIDWQTGAGCADCWLFTVFASELSVYTLTAITLERWHTITHAMQLDCKVQLRHAASIMVIGWIFSSAAALFPIFGVSSYMKVSICLPMDIDSPLSQLYVMFLLVLNVLAFVVICGCYLHIYLTVRNPNIVSSASDTRIAKRMATLIFTDFLCMAPISFFAISASLKVPLITVSKAKILLVLFYPINSCANPFLYAIFTKNFRRDLFILLSKFGCYEMQAQIYRTETSSTAHNSHPRNGHSSSVSRVTNGSSYILAPLNHLAQN</sequence>
<evidence type="ECO:0000250" key="1">
    <source>
        <dbReference type="UniProtKB" id="P20395"/>
    </source>
</evidence>
<evidence type="ECO:0000250" key="2">
    <source>
        <dbReference type="UniProtKB" id="P23945"/>
    </source>
</evidence>
<evidence type="ECO:0000255" key="3"/>
<evidence type="ECO:0000255" key="4">
    <source>
        <dbReference type="PROSITE-ProRule" id="PRU00521"/>
    </source>
</evidence>
<evidence type="ECO:0000256" key="5">
    <source>
        <dbReference type="SAM" id="MobiDB-lite"/>
    </source>
</evidence>
<dbReference type="EMBL" id="AY082514">
    <property type="protein sequence ID" value="AAL92577.1"/>
    <property type="molecule type" value="mRNA"/>
</dbReference>
<dbReference type="RefSeq" id="NP_001166420.1">
    <property type="nucleotide sequence ID" value="NM_001172949.1"/>
</dbReference>
<dbReference type="SMR" id="Q8R428"/>
<dbReference type="FunCoup" id="Q8R428">
    <property type="interactions" value="526"/>
</dbReference>
<dbReference type="STRING" id="10141.ENSCPOP00000010567"/>
<dbReference type="GlyCosmos" id="Q8R428">
    <property type="glycosylation" value="3 sites, No reported glycans"/>
</dbReference>
<dbReference type="GeneID" id="100135523"/>
<dbReference type="KEGG" id="cpoc:100135523"/>
<dbReference type="CTD" id="2492"/>
<dbReference type="eggNOG" id="KOG2087">
    <property type="taxonomic scope" value="Eukaryota"/>
</dbReference>
<dbReference type="InParanoid" id="Q8R428"/>
<dbReference type="OrthoDB" id="5981530at2759"/>
<dbReference type="Proteomes" id="UP000005447">
    <property type="component" value="Unassembled WGS sequence"/>
</dbReference>
<dbReference type="GO" id="GO:0016020">
    <property type="term" value="C:membrane"/>
    <property type="evidence" value="ECO:0000250"/>
    <property type="project" value="UniProtKB"/>
</dbReference>
<dbReference type="GO" id="GO:0005886">
    <property type="term" value="C:plasma membrane"/>
    <property type="evidence" value="ECO:0000250"/>
    <property type="project" value="UniProtKB"/>
</dbReference>
<dbReference type="GO" id="GO:0043235">
    <property type="term" value="C:receptor complex"/>
    <property type="evidence" value="ECO:0000250"/>
    <property type="project" value="UniProtKB"/>
</dbReference>
<dbReference type="GO" id="GO:0004963">
    <property type="term" value="F:follicle-stimulating hormone receptor activity"/>
    <property type="evidence" value="ECO:0000250"/>
    <property type="project" value="UniProtKB"/>
</dbReference>
<dbReference type="GO" id="GO:0008528">
    <property type="term" value="F:G protein-coupled peptide receptor activity"/>
    <property type="evidence" value="ECO:0007669"/>
    <property type="project" value="TreeGrafter"/>
</dbReference>
<dbReference type="GO" id="GO:0007189">
    <property type="term" value="P:adenylate cyclase-activating G protein-coupled receptor signaling pathway"/>
    <property type="evidence" value="ECO:0007669"/>
    <property type="project" value="TreeGrafter"/>
</dbReference>
<dbReference type="GO" id="GO:0071372">
    <property type="term" value="P:cellular response to follicle-stimulating hormone stimulus"/>
    <property type="evidence" value="ECO:0000250"/>
    <property type="project" value="UniProtKB"/>
</dbReference>
<dbReference type="GO" id="GO:0042699">
    <property type="term" value="P:follicle-stimulating hormone signaling pathway"/>
    <property type="evidence" value="ECO:0000250"/>
    <property type="project" value="UniProtKB"/>
</dbReference>
<dbReference type="GO" id="GO:0007186">
    <property type="term" value="P:G protein-coupled receptor signaling pathway"/>
    <property type="evidence" value="ECO:0000250"/>
    <property type="project" value="UniProtKB"/>
</dbReference>
<dbReference type="GO" id="GO:0009755">
    <property type="term" value="P:hormone-mediated signaling pathway"/>
    <property type="evidence" value="ECO:0007669"/>
    <property type="project" value="TreeGrafter"/>
</dbReference>
<dbReference type="GO" id="GO:0008584">
    <property type="term" value="P:male gonad development"/>
    <property type="evidence" value="ECO:0007669"/>
    <property type="project" value="TreeGrafter"/>
</dbReference>
<dbReference type="GO" id="GO:0070374">
    <property type="term" value="P:positive regulation of ERK1 and ERK2 cascade"/>
    <property type="evidence" value="ECO:0000250"/>
    <property type="project" value="UniProtKB"/>
</dbReference>
<dbReference type="GO" id="GO:0051897">
    <property type="term" value="P:positive regulation of phosphatidylinositol 3-kinase/protein kinase B signal transduction"/>
    <property type="evidence" value="ECO:0000250"/>
    <property type="project" value="UniProtKB"/>
</dbReference>
<dbReference type="GO" id="GO:0010738">
    <property type="term" value="P:regulation of protein kinase A signaling"/>
    <property type="evidence" value="ECO:0000250"/>
    <property type="project" value="UniProtKB"/>
</dbReference>
<dbReference type="FunFam" id="1.20.1070.10:FF:000019">
    <property type="entry name" value="Lutropin-choriogonadotropic hormone receptor"/>
    <property type="match status" value="1"/>
</dbReference>
<dbReference type="Gene3D" id="1.20.1070.10">
    <property type="entry name" value="Rhodopsin 7-helix transmembrane proteins"/>
    <property type="match status" value="1"/>
</dbReference>
<dbReference type="Gene3D" id="3.80.10.10">
    <property type="entry name" value="Ribonuclease Inhibitor"/>
    <property type="match status" value="1"/>
</dbReference>
<dbReference type="InterPro" id="IPR002272">
    <property type="entry name" value="FSH_rcpt"/>
</dbReference>
<dbReference type="InterPro" id="IPR024635">
    <property type="entry name" value="GnHR_TM"/>
</dbReference>
<dbReference type="InterPro" id="IPR000276">
    <property type="entry name" value="GPCR_Rhodpsn"/>
</dbReference>
<dbReference type="InterPro" id="IPR017452">
    <property type="entry name" value="GPCR_Rhodpsn_7TM"/>
</dbReference>
<dbReference type="InterPro" id="IPR002131">
    <property type="entry name" value="Gphrmn_rcpt_fam"/>
</dbReference>
<dbReference type="InterPro" id="IPR026906">
    <property type="entry name" value="LRR_5"/>
</dbReference>
<dbReference type="InterPro" id="IPR032675">
    <property type="entry name" value="LRR_dom_sf"/>
</dbReference>
<dbReference type="InterPro" id="IPR000372">
    <property type="entry name" value="LRRNT"/>
</dbReference>
<dbReference type="PANTHER" id="PTHR24372:SF5">
    <property type="entry name" value="FOLLICLE-STIMULATING HORMONE RECEPTOR"/>
    <property type="match status" value="1"/>
</dbReference>
<dbReference type="PANTHER" id="PTHR24372">
    <property type="entry name" value="GLYCOPROTEIN HORMONE RECEPTOR"/>
    <property type="match status" value="1"/>
</dbReference>
<dbReference type="Pfam" id="PF00001">
    <property type="entry name" value="7tm_1"/>
    <property type="match status" value="1"/>
</dbReference>
<dbReference type="Pfam" id="PF12369">
    <property type="entry name" value="GnHR_trans"/>
    <property type="match status" value="1"/>
</dbReference>
<dbReference type="Pfam" id="PF13306">
    <property type="entry name" value="LRR_5"/>
    <property type="match status" value="2"/>
</dbReference>
<dbReference type="Pfam" id="PF01462">
    <property type="entry name" value="LRRNT"/>
    <property type="match status" value="1"/>
</dbReference>
<dbReference type="PRINTS" id="PR01143">
    <property type="entry name" value="FSHRECEPTOR"/>
</dbReference>
<dbReference type="PRINTS" id="PR00373">
    <property type="entry name" value="GLYCHORMONER"/>
</dbReference>
<dbReference type="PRINTS" id="PR00237">
    <property type="entry name" value="GPCRRHODOPSN"/>
</dbReference>
<dbReference type="SMART" id="SM00013">
    <property type="entry name" value="LRRNT"/>
    <property type="match status" value="1"/>
</dbReference>
<dbReference type="SUPFAM" id="SSF81321">
    <property type="entry name" value="Family A G protein-coupled receptor-like"/>
    <property type="match status" value="1"/>
</dbReference>
<dbReference type="SUPFAM" id="SSF52058">
    <property type="entry name" value="L domain-like"/>
    <property type="match status" value="1"/>
</dbReference>
<dbReference type="PROSITE" id="PS00237">
    <property type="entry name" value="G_PROTEIN_RECEP_F1_1"/>
    <property type="match status" value="1"/>
</dbReference>
<dbReference type="PROSITE" id="PS50262">
    <property type="entry name" value="G_PROTEIN_RECEP_F1_2"/>
    <property type="match status" value="1"/>
</dbReference>
<gene>
    <name type="primary">FSHR</name>
</gene>
<reference key="1">
    <citation type="journal article" date="2003" name="Mol. Reprod. Dev.">
        <title>Optimization of superovulation induction by human menopausal gonadotropin in guinea pigs based on follicular waves and FSH-receptor homologies.</title>
        <authorList>
            <person name="Suzuki O."/>
            <person name="Koura M."/>
            <person name="Noguchi Y."/>
            <person name="Takano K."/>
            <person name="Yamamoto Y."/>
            <person name="Matsuda J."/>
        </authorList>
    </citation>
    <scope>NUCLEOTIDE SEQUENCE [MRNA]</scope>
    <source>
        <strain>Hartley</strain>
        <tissue>Testis</tissue>
    </source>
</reference>
<keyword id="KW-1003">Cell membrane</keyword>
<keyword id="KW-1015">Disulfide bond</keyword>
<keyword id="KW-0297">G-protein coupled receptor</keyword>
<keyword id="KW-0325">Glycoprotein</keyword>
<keyword id="KW-0433">Leucine-rich repeat</keyword>
<keyword id="KW-0472">Membrane</keyword>
<keyword id="KW-0675">Receptor</keyword>
<keyword id="KW-1185">Reference proteome</keyword>
<keyword id="KW-0677">Repeat</keyword>
<keyword id="KW-0732">Signal</keyword>
<keyword id="KW-0765">Sulfation</keyword>
<keyword id="KW-0807">Transducer</keyword>
<keyword id="KW-0812">Transmembrane</keyword>
<keyword id="KW-1133">Transmembrane helix</keyword>
<comment type="function">
    <text evidence="2">G protein-coupled receptor for follitropin, the follicle-stimulating hormone. Through cAMP production activates the downstream PI3K-AKT and ERK1/ERK2 signaling pathways.</text>
</comment>
<comment type="subunit">
    <text evidence="1 2">Homotrimer. Functions as a homotrimer binding the FSH hormone heterodimer composed of CGA and FSHB (By similarity). Interacts with ARRB2 (By similarity). Interacts with APPL2; interaction is independent of follicle stimulating hormone stimulation (By similarity).</text>
</comment>
<comment type="subcellular location">
    <subcellularLocation>
        <location evidence="2">Cell membrane</location>
        <topology evidence="2">Multi-pass membrane protein</topology>
    </subcellularLocation>
</comment>
<comment type="PTM">
    <text evidence="1">N-glycosylated; indirectly required for FSH-binding, possibly via a conformational change that allows high affinity binding of hormone.</text>
</comment>
<comment type="PTM">
    <text evidence="2">Sulfated.</text>
</comment>
<comment type="similarity">
    <text evidence="4">Belongs to the G-protein coupled receptor 1 family. FSH/LSH/TSH subfamily.</text>
</comment>